<proteinExistence type="evidence at transcript level"/>
<gene>
    <name evidence="3" type="primary">RLP12</name>
    <name evidence="5" type="ordered locus">At1g71400</name>
    <name evidence="6" type="ORF">F26A9.22</name>
    <name evidence="7" type="ORF">F3I17.30</name>
</gene>
<comment type="function">
    <text evidence="2">Involved in the perception of CLV3 and CLV3-like peptides, that act as extracellular signals regulating meristems maintenance.</text>
</comment>
<comment type="subcellular location">
    <subcellularLocation>
        <location evidence="4">Cell membrane</location>
        <topology evidence="4">Single-pass type I membrane protein</topology>
    </subcellularLocation>
</comment>
<comment type="similarity">
    <text evidence="4">Belongs to the RLP family.</text>
</comment>
<comment type="sequence caution" evidence="4">
    <conflict type="erroneous initiation">
        <sequence resource="EMBL-CDS" id="AAG51836"/>
    </conflict>
    <text>Truncated N-terminus.</text>
</comment>
<comment type="sequence caution" evidence="4">
    <conflict type="frameshift">
        <sequence resource="EMBL" id="BX817184"/>
    </conflict>
</comment>
<feature type="signal peptide" evidence="1">
    <location>
        <begin position="1"/>
        <end position="27"/>
    </location>
</feature>
<feature type="chain" id="PRO_0000401214" description="Receptor-like protein 12">
    <location>
        <begin position="28"/>
        <end position="847"/>
    </location>
</feature>
<feature type="topological domain" description="Extracellular" evidence="1">
    <location>
        <begin position="28"/>
        <end position="798"/>
    </location>
</feature>
<feature type="transmembrane region" description="Helical" evidence="1">
    <location>
        <begin position="799"/>
        <end position="819"/>
    </location>
</feature>
<feature type="topological domain" description="Cytoplasmic" evidence="1">
    <location>
        <begin position="820"/>
        <end position="847"/>
    </location>
</feature>
<feature type="repeat" description="LRR 1" evidence="1">
    <location>
        <begin position="109"/>
        <end position="133"/>
    </location>
</feature>
<feature type="repeat" description="LRR 2" evidence="1">
    <location>
        <begin position="135"/>
        <end position="157"/>
    </location>
</feature>
<feature type="repeat" description="LRR 3" evidence="1">
    <location>
        <begin position="158"/>
        <end position="181"/>
    </location>
</feature>
<feature type="repeat" description="LRR 4" evidence="1">
    <location>
        <begin position="183"/>
        <end position="205"/>
    </location>
</feature>
<feature type="repeat" description="LRR 5" evidence="1">
    <location>
        <begin position="206"/>
        <end position="229"/>
    </location>
</feature>
<feature type="repeat" description="LRR 6" evidence="1">
    <location>
        <begin position="231"/>
        <end position="253"/>
    </location>
</feature>
<feature type="repeat" description="LRR 7" evidence="1">
    <location>
        <begin position="254"/>
        <end position="277"/>
    </location>
</feature>
<feature type="repeat" description="LRR 8" evidence="1">
    <location>
        <begin position="279"/>
        <end position="301"/>
    </location>
</feature>
<feature type="repeat" description="LRR 9" evidence="1">
    <location>
        <begin position="302"/>
        <end position="325"/>
    </location>
</feature>
<feature type="repeat" description="LRR 10" evidence="1">
    <location>
        <begin position="326"/>
        <end position="350"/>
    </location>
</feature>
<feature type="repeat" description="LRR 11" evidence="1">
    <location>
        <begin position="351"/>
        <end position="374"/>
    </location>
</feature>
<feature type="repeat" description="LRR 12" evidence="1">
    <location>
        <begin position="375"/>
        <end position="398"/>
    </location>
</feature>
<feature type="repeat" description="LRR 13" evidence="1">
    <location>
        <begin position="400"/>
        <end position="422"/>
    </location>
</feature>
<feature type="repeat" description="LRR 14" evidence="1">
    <location>
        <begin position="424"/>
        <end position="442"/>
    </location>
</feature>
<feature type="repeat" description="LRR 15" evidence="1">
    <location>
        <begin position="443"/>
        <end position="466"/>
    </location>
</feature>
<feature type="repeat" description="LRR 16" evidence="1">
    <location>
        <begin position="467"/>
        <end position="491"/>
    </location>
</feature>
<feature type="repeat" description="LRR 17" evidence="1">
    <location>
        <begin position="492"/>
        <end position="514"/>
    </location>
</feature>
<feature type="repeat" description="LRR 18" evidence="1">
    <location>
        <begin position="516"/>
        <end position="539"/>
    </location>
</feature>
<feature type="repeat" description="LRR 19" evidence="1">
    <location>
        <begin position="541"/>
        <end position="562"/>
    </location>
</feature>
<feature type="repeat" description="LRR 20" evidence="1">
    <location>
        <begin position="563"/>
        <end position="587"/>
    </location>
</feature>
<feature type="repeat" description="LRR 21" evidence="1">
    <location>
        <begin position="589"/>
        <end position="613"/>
    </location>
</feature>
<feature type="repeat" description="LRR 22" evidence="1">
    <location>
        <begin position="657"/>
        <end position="681"/>
    </location>
</feature>
<feature type="repeat" description="LRR 23" evidence="1">
    <location>
        <begin position="682"/>
        <end position="704"/>
    </location>
</feature>
<feature type="repeat" description="LRR 24" evidence="1">
    <location>
        <begin position="705"/>
        <end position="729"/>
    </location>
</feature>
<feature type="repeat" description="LRR 25" evidence="1">
    <location>
        <begin position="731"/>
        <end position="754"/>
    </location>
</feature>
<feature type="glycosylation site" description="N-linked (GlcNAc...) asparagine" evidence="1">
    <location>
        <position position="52"/>
    </location>
</feature>
<feature type="glycosylation site" description="N-linked (GlcNAc...) asparagine" evidence="1">
    <location>
        <position position="66"/>
    </location>
</feature>
<feature type="glycosylation site" description="N-linked (GlcNAc...) asparagine" evidence="1">
    <location>
        <position position="103"/>
    </location>
</feature>
<feature type="glycosylation site" description="N-linked (GlcNAc...) asparagine" evidence="1">
    <location>
        <position position="132"/>
    </location>
</feature>
<feature type="glycosylation site" description="N-linked (GlcNAc...) asparagine" evidence="1">
    <location>
        <position position="180"/>
    </location>
</feature>
<feature type="glycosylation site" description="N-linked (GlcNAc...) asparagine" evidence="1">
    <location>
        <position position="210"/>
    </location>
</feature>
<feature type="glycosylation site" description="N-linked (GlcNAc...) asparagine" evidence="1">
    <location>
        <position position="228"/>
    </location>
</feature>
<feature type="glycosylation site" description="N-linked (GlcNAc...) asparagine" evidence="1">
    <location>
        <position position="263"/>
    </location>
</feature>
<feature type="glycosylation site" description="N-linked (GlcNAc...) asparagine" evidence="1">
    <location>
        <position position="276"/>
    </location>
</feature>
<feature type="glycosylation site" description="N-linked (GlcNAc...) asparagine" evidence="1">
    <location>
        <position position="289"/>
    </location>
</feature>
<feature type="glycosylation site" description="N-linked (GlcNAc...) asparagine" evidence="1">
    <location>
        <position position="346"/>
    </location>
</feature>
<feature type="glycosylation site" description="N-linked (GlcNAc...) asparagine" evidence="1">
    <location>
        <position position="386"/>
    </location>
</feature>
<feature type="glycosylation site" description="N-linked (GlcNAc...) asparagine" evidence="1">
    <location>
        <position position="437"/>
    </location>
</feature>
<feature type="glycosylation site" description="N-linked (GlcNAc...) asparagine" evidence="1">
    <location>
        <position position="489"/>
    </location>
</feature>
<feature type="glycosylation site" description="N-linked (GlcNAc...) asparagine" evidence="1">
    <location>
        <position position="503"/>
    </location>
</feature>
<feature type="glycosylation site" description="N-linked (GlcNAc...) asparagine" evidence="1">
    <location>
        <position position="601"/>
    </location>
</feature>
<feature type="glycosylation site" description="N-linked (GlcNAc...) asparagine" evidence="1">
    <location>
        <position position="688"/>
    </location>
</feature>
<feature type="glycosylation site" description="N-linked (GlcNAc...) asparagine" evidence="1">
    <location>
        <position position="704"/>
    </location>
</feature>
<feature type="glycosylation site" description="N-linked (GlcNAc...) asparagine" evidence="1">
    <location>
        <position position="736"/>
    </location>
</feature>
<feature type="sequence conflict" description="In Ref. 3; BX817184." evidence="4" ref="3">
    <original>I</original>
    <variation>T</variation>
    <location>
        <position position="300"/>
    </location>
</feature>
<feature type="sequence conflict" description="In Ref. 3; BX817184." evidence="4" ref="3">
    <original>A</original>
    <variation>E</variation>
    <location>
        <position position="728"/>
    </location>
</feature>
<organism>
    <name type="scientific">Arabidopsis thaliana</name>
    <name type="common">Mouse-ear cress</name>
    <dbReference type="NCBI Taxonomy" id="3702"/>
    <lineage>
        <taxon>Eukaryota</taxon>
        <taxon>Viridiplantae</taxon>
        <taxon>Streptophyta</taxon>
        <taxon>Embryophyta</taxon>
        <taxon>Tracheophyta</taxon>
        <taxon>Spermatophyta</taxon>
        <taxon>Magnoliopsida</taxon>
        <taxon>eudicotyledons</taxon>
        <taxon>Gunneridae</taxon>
        <taxon>Pentapetalae</taxon>
        <taxon>rosids</taxon>
        <taxon>malvids</taxon>
        <taxon>Brassicales</taxon>
        <taxon>Brassicaceae</taxon>
        <taxon>Camelineae</taxon>
        <taxon>Arabidopsis</taxon>
    </lineage>
</organism>
<keyword id="KW-1003">Cell membrane</keyword>
<keyword id="KW-0325">Glycoprotein</keyword>
<keyword id="KW-0433">Leucine-rich repeat</keyword>
<keyword id="KW-0472">Membrane</keyword>
<keyword id="KW-1185">Reference proteome</keyword>
<keyword id="KW-0677">Repeat</keyword>
<keyword id="KW-0732">Signal</keyword>
<keyword id="KW-0812">Transmembrane</keyword>
<keyword id="KW-1133">Transmembrane helix</keyword>
<dbReference type="EMBL" id="AC016162">
    <property type="status" value="NOT_ANNOTATED_CDS"/>
    <property type="molecule type" value="Genomic_DNA"/>
</dbReference>
<dbReference type="EMBL" id="AC016163">
    <property type="protein sequence ID" value="AAG51836.1"/>
    <property type="status" value="ALT_INIT"/>
    <property type="molecule type" value="Genomic_DNA"/>
</dbReference>
<dbReference type="EMBL" id="CP002684">
    <property type="protein sequence ID" value="AEE35197.1"/>
    <property type="molecule type" value="Genomic_DNA"/>
</dbReference>
<dbReference type="EMBL" id="BX817184">
    <property type="status" value="NOT_ANNOTATED_CDS"/>
    <property type="molecule type" value="mRNA"/>
</dbReference>
<dbReference type="RefSeq" id="NP_177296.2">
    <property type="nucleotide sequence ID" value="NM_105809.4"/>
</dbReference>
<dbReference type="SMR" id="Q9C9H7"/>
<dbReference type="FunCoup" id="Q9C9H7">
    <property type="interactions" value="1"/>
</dbReference>
<dbReference type="STRING" id="3702.Q9C9H7"/>
<dbReference type="GlyCosmos" id="Q9C9H7">
    <property type="glycosylation" value="19 sites, No reported glycans"/>
</dbReference>
<dbReference type="GlyGen" id="Q9C9H7">
    <property type="glycosylation" value="19 sites"/>
</dbReference>
<dbReference type="PaxDb" id="3702-AT1G71400.1"/>
<dbReference type="ProteomicsDB" id="228100"/>
<dbReference type="EnsemblPlants" id="AT1G71400.1">
    <property type="protein sequence ID" value="AT1G71400.1"/>
    <property type="gene ID" value="AT1G71400"/>
</dbReference>
<dbReference type="GeneID" id="843481"/>
<dbReference type="Gramene" id="AT1G71400.1">
    <property type="protein sequence ID" value="AT1G71400.1"/>
    <property type="gene ID" value="AT1G71400"/>
</dbReference>
<dbReference type="KEGG" id="ath:AT1G71400"/>
<dbReference type="Araport" id="AT1G71400"/>
<dbReference type="TAIR" id="AT1G71400">
    <property type="gene designation" value="RLP12"/>
</dbReference>
<dbReference type="eggNOG" id="KOG0619">
    <property type="taxonomic scope" value="Eukaryota"/>
</dbReference>
<dbReference type="HOGENOM" id="CLU_000288_18_3_1"/>
<dbReference type="InParanoid" id="Q9C9H7"/>
<dbReference type="OMA" id="HTIYYES"/>
<dbReference type="PRO" id="PR:Q9C9H7"/>
<dbReference type="Proteomes" id="UP000006548">
    <property type="component" value="Chromosome 1"/>
</dbReference>
<dbReference type="ExpressionAtlas" id="Q9C9H7">
    <property type="expression patterns" value="baseline and differential"/>
</dbReference>
<dbReference type="GO" id="GO:0005886">
    <property type="term" value="C:plasma membrane"/>
    <property type="evidence" value="ECO:0007669"/>
    <property type="project" value="UniProtKB-SubCell"/>
</dbReference>
<dbReference type="GO" id="GO:0010073">
    <property type="term" value="P:meristem maintenance"/>
    <property type="evidence" value="ECO:0000315"/>
    <property type="project" value="UniProtKB"/>
</dbReference>
<dbReference type="FunFam" id="3.80.10.10:FF:001519">
    <property type="entry name" value="Highly similar to receptor-like protein kinase"/>
    <property type="match status" value="1"/>
</dbReference>
<dbReference type="FunFam" id="3.80.10.10:FF:000041">
    <property type="entry name" value="LRR receptor-like serine/threonine-protein kinase ERECTA"/>
    <property type="match status" value="1"/>
</dbReference>
<dbReference type="FunFam" id="3.80.10.10:FF:000111">
    <property type="entry name" value="LRR receptor-like serine/threonine-protein kinase ERECTA"/>
    <property type="match status" value="1"/>
</dbReference>
<dbReference type="FunFam" id="3.80.10.10:FF:000713">
    <property type="entry name" value="Receptor-like protein 48"/>
    <property type="match status" value="1"/>
</dbReference>
<dbReference type="Gene3D" id="3.80.10.10">
    <property type="entry name" value="Ribonuclease Inhibitor"/>
    <property type="match status" value="4"/>
</dbReference>
<dbReference type="InterPro" id="IPR001611">
    <property type="entry name" value="Leu-rich_rpt"/>
</dbReference>
<dbReference type="InterPro" id="IPR003591">
    <property type="entry name" value="Leu-rich_rpt_typical-subtyp"/>
</dbReference>
<dbReference type="InterPro" id="IPR032675">
    <property type="entry name" value="LRR_dom_sf"/>
</dbReference>
<dbReference type="InterPro" id="IPR013210">
    <property type="entry name" value="LRR_N_plant-typ"/>
</dbReference>
<dbReference type="InterPro" id="IPR055414">
    <property type="entry name" value="LRR_R13L4/SHOC2-like"/>
</dbReference>
<dbReference type="InterPro" id="IPR050647">
    <property type="entry name" value="Plant_LRR-RLKs"/>
</dbReference>
<dbReference type="PANTHER" id="PTHR48056:SF67">
    <property type="entry name" value="LEUCINE-RICH REPEAT-CONTAINING N-TERMINAL PLANT-TYPE DOMAIN-CONTAINING PROTEIN"/>
    <property type="match status" value="1"/>
</dbReference>
<dbReference type="PANTHER" id="PTHR48056">
    <property type="entry name" value="LRR RECEPTOR-LIKE SERINE/THREONINE-PROTEIN KINASE-RELATED"/>
    <property type="match status" value="1"/>
</dbReference>
<dbReference type="Pfam" id="PF00560">
    <property type="entry name" value="LRR_1"/>
    <property type="match status" value="9"/>
</dbReference>
<dbReference type="Pfam" id="PF23598">
    <property type="entry name" value="LRR_14"/>
    <property type="match status" value="1"/>
</dbReference>
<dbReference type="Pfam" id="PF13855">
    <property type="entry name" value="LRR_8"/>
    <property type="match status" value="2"/>
</dbReference>
<dbReference type="Pfam" id="PF08263">
    <property type="entry name" value="LRRNT_2"/>
    <property type="match status" value="1"/>
</dbReference>
<dbReference type="PRINTS" id="PR00019">
    <property type="entry name" value="LEURICHRPT"/>
</dbReference>
<dbReference type="SMART" id="SM00365">
    <property type="entry name" value="LRR_SD22"/>
    <property type="match status" value="5"/>
</dbReference>
<dbReference type="SMART" id="SM00369">
    <property type="entry name" value="LRR_TYP"/>
    <property type="match status" value="10"/>
</dbReference>
<dbReference type="SUPFAM" id="SSF52058">
    <property type="entry name" value="L domain-like"/>
    <property type="match status" value="2"/>
</dbReference>
<dbReference type="SUPFAM" id="SSF52047">
    <property type="entry name" value="RNI-like"/>
    <property type="match status" value="1"/>
</dbReference>
<sequence length="847" mass="95284">MMIRSHRHWVFSSRIIIFLSLLVHSLASSSPHFCRDDQRDALLEFRGEFPINASWHIMNQWRGPWNKSTDCCLWNGVTCNDKSGQVISLDIPNTFLNNYLKTNSSLFKLQYLRHLDLTNCNLYGEIPSSLGNLSHLTLVNLYFNKFVGEIPASIGNLNQLRHLILANNVLTGEIPSSLGNLSRLVNLELFSNRLVGKIPDSIGDLKQLRNLSLASNNLIGEIPSSLGNLSNLVHLVLTHNQLVGEVPASIGNLIELRVMSFENNSLSGNIPISFANLTKLSIFVLSSNNFTSTFPFDMSIFHNLEYFDVSYNSFSGPFPKSLLLIPSLESIYLQENQFTGPIEFANTSSSTKLQDLILGRNRLHGPIPESISRLLNLEELDISHNNFTGAIPPTISKLVNLLHLDLSKNNLEGEVPACLWRLNTMVLSHNSFSSFENTSQEEALIEELDLNSNSFQGPIPYMICKLSSLGFLDLSNNLFSGSIPSCIRNFSGSIKELNLGDNNFSGTLPDIFSKATELVSLDVSHNQLEGKFPKSLINCKALELVNVESNKIKDIFPSWLESLPSLHVLNLRSNKFYGPLYHRHASIGFQSLRIIDISHNNFSGTLPPYYFSNWKDMTTLTEEMDQYMTEFWRYADSYYHEMEMVNKGVDMSFERIRRDFRAIDFSGNKINGNIPESLGYLKELRVLNLSGNAFTSVIPRFLANLTKLETLDISRNKLSGQIPQDLAALSFLSYMNFSHNLLQGPVPRGTQFQRQKCSSFLDNPGLYGLEDICRDTGALNPTSQLPEDLSEAEENMFNWVAAAIAYGPGVLCGLVIGHFYTSHNHEWFTEKFGRKQHKALTSVKCSL</sequence>
<evidence type="ECO:0000255" key="1"/>
<evidence type="ECO:0000269" key="2">
    <source>
    </source>
</evidence>
<evidence type="ECO:0000303" key="3">
    <source>
    </source>
</evidence>
<evidence type="ECO:0000305" key="4"/>
<evidence type="ECO:0000312" key="5">
    <source>
        <dbReference type="Araport" id="AT1G71400"/>
    </source>
</evidence>
<evidence type="ECO:0000312" key="6">
    <source>
        <dbReference type="EMBL" id="AAG51836.1"/>
    </source>
</evidence>
<evidence type="ECO:0000312" key="7">
    <source>
        <dbReference type="EMBL" id="AC016162"/>
    </source>
</evidence>
<protein>
    <recommendedName>
        <fullName evidence="3">Receptor-like protein 12</fullName>
        <shortName evidence="3">AtRLP12</shortName>
    </recommendedName>
</protein>
<reference key="1">
    <citation type="journal article" date="2000" name="Nature">
        <title>Sequence and analysis of chromosome 1 of the plant Arabidopsis thaliana.</title>
        <authorList>
            <person name="Theologis A."/>
            <person name="Ecker J.R."/>
            <person name="Palm C.J."/>
            <person name="Federspiel N.A."/>
            <person name="Kaul S."/>
            <person name="White O."/>
            <person name="Alonso J."/>
            <person name="Altafi H."/>
            <person name="Araujo R."/>
            <person name="Bowman C.L."/>
            <person name="Brooks S.Y."/>
            <person name="Buehler E."/>
            <person name="Chan A."/>
            <person name="Chao Q."/>
            <person name="Chen H."/>
            <person name="Cheuk R.F."/>
            <person name="Chin C.W."/>
            <person name="Chung M.K."/>
            <person name="Conn L."/>
            <person name="Conway A.B."/>
            <person name="Conway A.R."/>
            <person name="Creasy T.H."/>
            <person name="Dewar K."/>
            <person name="Dunn P."/>
            <person name="Etgu P."/>
            <person name="Feldblyum T.V."/>
            <person name="Feng J.-D."/>
            <person name="Fong B."/>
            <person name="Fujii C.Y."/>
            <person name="Gill J.E."/>
            <person name="Goldsmith A.D."/>
            <person name="Haas B."/>
            <person name="Hansen N.F."/>
            <person name="Hughes B."/>
            <person name="Huizar L."/>
            <person name="Hunter J.L."/>
            <person name="Jenkins J."/>
            <person name="Johnson-Hopson C."/>
            <person name="Khan S."/>
            <person name="Khaykin E."/>
            <person name="Kim C.J."/>
            <person name="Koo H.L."/>
            <person name="Kremenetskaia I."/>
            <person name="Kurtz D.B."/>
            <person name="Kwan A."/>
            <person name="Lam B."/>
            <person name="Langin-Hooper S."/>
            <person name="Lee A."/>
            <person name="Lee J.M."/>
            <person name="Lenz C.A."/>
            <person name="Li J.H."/>
            <person name="Li Y.-P."/>
            <person name="Lin X."/>
            <person name="Liu S.X."/>
            <person name="Liu Z.A."/>
            <person name="Luros J.S."/>
            <person name="Maiti R."/>
            <person name="Marziali A."/>
            <person name="Militscher J."/>
            <person name="Miranda M."/>
            <person name="Nguyen M."/>
            <person name="Nierman W.C."/>
            <person name="Osborne B.I."/>
            <person name="Pai G."/>
            <person name="Peterson J."/>
            <person name="Pham P.K."/>
            <person name="Rizzo M."/>
            <person name="Rooney T."/>
            <person name="Rowley D."/>
            <person name="Sakano H."/>
            <person name="Salzberg S.L."/>
            <person name="Schwartz J.R."/>
            <person name="Shinn P."/>
            <person name="Southwick A.M."/>
            <person name="Sun H."/>
            <person name="Tallon L.J."/>
            <person name="Tambunga G."/>
            <person name="Toriumi M.J."/>
            <person name="Town C.D."/>
            <person name="Utterback T."/>
            <person name="Van Aken S."/>
            <person name="Vaysberg M."/>
            <person name="Vysotskaia V.S."/>
            <person name="Walker M."/>
            <person name="Wu D."/>
            <person name="Yu G."/>
            <person name="Fraser C.M."/>
            <person name="Venter J.C."/>
            <person name="Davis R.W."/>
        </authorList>
    </citation>
    <scope>NUCLEOTIDE SEQUENCE [LARGE SCALE GENOMIC DNA]</scope>
    <source>
        <strain>cv. Columbia</strain>
    </source>
</reference>
<reference key="2">
    <citation type="journal article" date="2017" name="Plant J.">
        <title>Araport11: a complete reannotation of the Arabidopsis thaliana reference genome.</title>
        <authorList>
            <person name="Cheng C.Y."/>
            <person name="Krishnakumar V."/>
            <person name="Chan A.P."/>
            <person name="Thibaud-Nissen F."/>
            <person name="Schobel S."/>
            <person name="Town C.D."/>
        </authorList>
    </citation>
    <scope>GENOME REANNOTATION</scope>
    <source>
        <strain>cv. Columbia</strain>
    </source>
</reference>
<reference key="3">
    <citation type="journal article" date="2004" name="Genome Res.">
        <title>Whole genome sequence comparisons and 'full-length' cDNA sequences: a combined approach to evaluate and improve Arabidopsis genome annotation.</title>
        <authorList>
            <person name="Castelli V."/>
            <person name="Aury J.-M."/>
            <person name="Jaillon O."/>
            <person name="Wincker P."/>
            <person name="Clepet C."/>
            <person name="Menard M."/>
            <person name="Cruaud C."/>
            <person name="Quetier F."/>
            <person name="Scarpelli C."/>
            <person name="Schaechter V."/>
            <person name="Temple G."/>
            <person name="Caboche M."/>
            <person name="Weissenbach J."/>
            <person name="Salanoubat M."/>
        </authorList>
    </citation>
    <scope>NUCLEOTIDE SEQUENCE [LARGE SCALE MRNA]</scope>
    <source>
        <strain>cv. Columbia</strain>
    </source>
</reference>
<reference key="4">
    <citation type="journal article" date="2005" name="Plant Physiol.">
        <title>Phylogenomic analysis of the receptor-like proteins of rice and Arabidopsis.</title>
        <authorList>
            <person name="Fritz-Laylin L.K."/>
            <person name="Krishnamurthy N."/>
            <person name="Toer M."/>
            <person name="Sjoelander K.V."/>
            <person name="Jones J.D."/>
        </authorList>
    </citation>
    <scope>GENE FAMILY</scope>
</reference>
<reference key="5">
    <citation type="journal article" date="2008" name="Plant Physiol.">
        <title>A genome-wide functional investigation into the roles of receptor-like proteins in Arabidopsis.</title>
        <authorList>
            <person name="Wang G."/>
            <person name="Ellendorff U."/>
            <person name="Kemp B."/>
            <person name="Mansfield J.W."/>
            <person name="Forsyth A."/>
            <person name="Mitchell K."/>
            <person name="Bastas K."/>
            <person name="Liu C.-M."/>
            <person name="Woods-Toer A."/>
            <person name="Zipfel C."/>
            <person name="de Wit P.J.G.M."/>
            <person name="Jones J.D.G."/>
            <person name="Toer M."/>
            <person name="Thomma B.P.H.J."/>
        </authorList>
    </citation>
    <scope>GENE FAMILY</scope>
    <scope>NOMENCLATURE</scope>
</reference>
<reference key="6">
    <citation type="journal article" date="2010" name="Plant Physiol.">
        <title>Functional analyses of the CLAVATA2-like proteins and their domains that contribute to CLAVATA2 specificity.</title>
        <authorList>
            <person name="Wang G."/>
            <person name="Long Y."/>
            <person name="Thomma B.P.H.J."/>
            <person name="de Wit P.J.G.M."/>
            <person name="Angenent G.C."/>
            <person name="Fiers M."/>
        </authorList>
    </citation>
    <scope>FUNCTION</scope>
</reference>
<accession>Q9C9H7</accession>
<name>RLP12_ARATH</name>